<feature type="chain" id="PRO_0000369427" description="SPbeta prophage-derived uncharacterized protein YosD">
    <location>
        <begin position="1"/>
        <end position="131"/>
    </location>
</feature>
<feature type="region of interest" description="Disordered" evidence="1">
    <location>
        <begin position="102"/>
        <end position="131"/>
    </location>
</feature>
<feature type="compositionally biased region" description="Polar residues" evidence="1">
    <location>
        <begin position="111"/>
        <end position="125"/>
    </location>
</feature>
<proteinExistence type="predicted"/>
<dbReference type="EMBL" id="AL009126">
    <property type="protein sequence ID" value="CAB13908.1"/>
    <property type="molecule type" value="Genomic_DNA"/>
</dbReference>
<dbReference type="RefSeq" id="NP_389898.1">
    <property type="nucleotide sequence ID" value="NC_000964.3"/>
</dbReference>
<dbReference type="RefSeq" id="WP_009967464.1">
    <property type="nucleotide sequence ID" value="NZ_OZ025638.1"/>
</dbReference>
<dbReference type="FunCoup" id="O31885">
    <property type="interactions" value="87"/>
</dbReference>
<dbReference type="STRING" id="224308.BSU20160"/>
<dbReference type="PaxDb" id="224308-BSU20160"/>
<dbReference type="EnsemblBacteria" id="CAB13908">
    <property type="protein sequence ID" value="CAB13908"/>
    <property type="gene ID" value="BSU_20160"/>
</dbReference>
<dbReference type="GeneID" id="939554"/>
<dbReference type="KEGG" id="bsu:BSU20160"/>
<dbReference type="PATRIC" id="fig|224308.179.peg.2206"/>
<dbReference type="InParanoid" id="O31885"/>
<dbReference type="OrthoDB" id="2891272at2"/>
<dbReference type="BioCyc" id="BSUB:BSU20160-MONOMER"/>
<dbReference type="Proteomes" id="UP000001570">
    <property type="component" value="Chromosome"/>
</dbReference>
<gene>
    <name type="primary">yosD</name>
    <name type="ordered locus">BSU20160</name>
</gene>
<protein>
    <recommendedName>
        <fullName>SPbeta prophage-derived uncharacterized protein YosD</fullName>
    </recommendedName>
</protein>
<name>YOSD_BACSU</name>
<accession>O31885</accession>
<reference key="1">
    <citation type="journal article" date="1997" name="Nature">
        <title>The complete genome sequence of the Gram-positive bacterium Bacillus subtilis.</title>
        <authorList>
            <person name="Kunst F."/>
            <person name="Ogasawara N."/>
            <person name="Moszer I."/>
            <person name="Albertini A.M."/>
            <person name="Alloni G."/>
            <person name="Azevedo V."/>
            <person name="Bertero M.G."/>
            <person name="Bessieres P."/>
            <person name="Bolotin A."/>
            <person name="Borchert S."/>
            <person name="Borriss R."/>
            <person name="Boursier L."/>
            <person name="Brans A."/>
            <person name="Braun M."/>
            <person name="Brignell S.C."/>
            <person name="Bron S."/>
            <person name="Brouillet S."/>
            <person name="Bruschi C.V."/>
            <person name="Caldwell B."/>
            <person name="Capuano V."/>
            <person name="Carter N.M."/>
            <person name="Choi S.-K."/>
            <person name="Codani J.-J."/>
            <person name="Connerton I.F."/>
            <person name="Cummings N.J."/>
            <person name="Daniel R.A."/>
            <person name="Denizot F."/>
            <person name="Devine K.M."/>
            <person name="Duesterhoeft A."/>
            <person name="Ehrlich S.D."/>
            <person name="Emmerson P.T."/>
            <person name="Entian K.-D."/>
            <person name="Errington J."/>
            <person name="Fabret C."/>
            <person name="Ferrari E."/>
            <person name="Foulger D."/>
            <person name="Fritz C."/>
            <person name="Fujita M."/>
            <person name="Fujita Y."/>
            <person name="Fuma S."/>
            <person name="Galizzi A."/>
            <person name="Galleron N."/>
            <person name="Ghim S.-Y."/>
            <person name="Glaser P."/>
            <person name="Goffeau A."/>
            <person name="Golightly E.J."/>
            <person name="Grandi G."/>
            <person name="Guiseppi G."/>
            <person name="Guy B.J."/>
            <person name="Haga K."/>
            <person name="Haiech J."/>
            <person name="Harwood C.R."/>
            <person name="Henaut A."/>
            <person name="Hilbert H."/>
            <person name="Holsappel S."/>
            <person name="Hosono S."/>
            <person name="Hullo M.-F."/>
            <person name="Itaya M."/>
            <person name="Jones L.-M."/>
            <person name="Joris B."/>
            <person name="Karamata D."/>
            <person name="Kasahara Y."/>
            <person name="Klaerr-Blanchard M."/>
            <person name="Klein C."/>
            <person name="Kobayashi Y."/>
            <person name="Koetter P."/>
            <person name="Koningstein G."/>
            <person name="Krogh S."/>
            <person name="Kumano M."/>
            <person name="Kurita K."/>
            <person name="Lapidus A."/>
            <person name="Lardinois S."/>
            <person name="Lauber J."/>
            <person name="Lazarevic V."/>
            <person name="Lee S.-M."/>
            <person name="Levine A."/>
            <person name="Liu H."/>
            <person name="Masuda S."/>
            <person name="Mauel C."/>
            <person name="Medigue C."/>
            <person name="Medina N."/>
            <person name="Mellado R.P."/>
            <person name="Mizuno M."/>
            <person name="Moestl D."/>
            <person name="Nakai S."/>
            <person name="Noback M."/>
            <person name="Noone D."/>
            <person name="O'Reilly M."/>
            <person name="Ogawa K."/>
            <person name="Ogiwara A."/>
            <person name="Oudega B."/>
            <person name="Park S.-H."/>
            <person name="Parro V."/>
            <person name="Pohl T.M."/>
            <person name="Portetelle D."/>
            <person name="Porwollik S."/>
            <person name="Prescott A.M."/>
            <person name="Presecan E."/>
            <person name="Pujic P."/>
            <person name="Purnelle B."/>
            <person name="Rapoport G."/>
            <person name="Rey M."/>
            <person name="Reynolds S."/>
            <person name="Rieger M."/>
            <person name="Rivolta C."/>
            <person name="Rocha E."/>
            <person name="Roche B."/>
            <person name="Rose M."/>
            <person name="Sadaie Y."/>
            <person name="Sato T."/>
            <person name="Scanlan E."/>
            <person name="Schleich S."/>
            <person name="Schroeter R."/>
            <person name="Scoffone F."/>
            <person name="Sekiguchi J."/>
            <person name="Sekowska A."/>
            <person name="Seror S.J."/>
            <person name="Serror P."/>
            <person name="Shin B.-S."/>
            <person name="Soldo B."/>
            <person name="Sorokin A."/>
            <person name="Tacconi E."/>
            <person name="Takagi T."/>
            <person name="Takahashi H."/>
            <person name="Takemaru K."/>
            <person name="Takeuchi M."/>
            <person name="Tamakoshi A."/>
            <person name="Tanaka T."/>
            <person name="Terpstra P."/>
            <person name="Tognoni A."/>
            <person name="Tosato V."/>
            <person name="Uchiyama S."/>
            <person name="Vandenbol M."/>
            <person name="Vannier F."/>
            <person name="Vassarotti A."/>
            <person name="Viari A."/>
            <person name="Wambutt R."/>
            <person name="Wedler E."/>
            <person name="Wedler H."/>
            <person name="Weitzenegger T."/>
            <person name="Winters P."/>
            <person name="Wipat A."/>
            <person name="Yamamoto H."/>
            <person name="Yamane K."/>
            <person name="Yasumoto K."/>
            <person name="Yata K."/>
            <person name="Yoshida K."/>
            <person name="Yoshikawa H.-F."/>
            <person name="Zumstein E."/>
            <person name="Yoshikawa H."/>
            <person name="Danchin A."/>
        </authorList>
    </citation>
    <scope>NUCLEOTIDE SEQUENCE [LARGE SCALE GENOMIC DNA]</scope>
    <source>
        <strain>168</strain>
    </source>
</reference>
<evidence type="ECO:0000256" key="1">
    <source>
        <dbReference type="SAM" id="MobiDB-lite"/>
    </source>
</evidence>
<sequence length="131" mass="15617">MGRHKATIEGLVMKERYYSHRAPGTERWITQPVCKVTRTEPIFEGYIDIEPIEIGGKVYIPGLNEYVIVTDRQRNIHNEWTYQTDRVIKTIIDEKSLKECEEHNNKKAKNNDTQNQRQIKTSWWQRLTKKD</sequence>
<keyword id="KW-1185">Reference proteome</keyword>
<organism>
    <name type="scientific">Bacillus subtilis (strain 168)</name>
    <dbReference type="NCBI Taxonomy" id="224308"/>
    <lineage>
        <taxon>Bacteria</taxon>
        <taxon>Bacillati</taxon>
        <taxon>Bacillota</taxon>
        <taxon>Bacilli</taxon>
        <taxon>Bacillales</taxon>
        <taxon>Bacillaceae</taxon>
        <taxon>Bacillus</taxon>
    </lineage>
</organism>